<name>TILS_CHRVO</name>
<evidence type="ECO:0000255" key="1">
    <source>
        <dbReference type="HAMAP-Rule" id="MF_01161"/>
    </source>
</evidence>
<gene>
    <name evidence="1" type="primary">tilS</name>
    <name type="ordered locus">CV_3189</name>
</gene>
<accession>Q7NT72</accession>
<dbReference type="EC" id="6.3.4.19" evidence="1"/>
<dbReference type="EMBL" id="AE016825">
    <property type="protein sequence ID" value="AAQ60855.1"/>
    <property type="molecule type" value="Genomic_DNA"/>
</dbReference>
<dbReference type="SMR" id="Q7NT72"/>
<dbReference type="STRING" id="243365.CV_3189"/>
<dbReference type="KEGG" id="cvi:CV_3189"/>
<dbReference type="eggNOG" id="COG0037">
    <property type="taxonomic scope" value="Bacteria"/>
</dbReference>
<dbReference type="HOGENOM" id="CLU_018869_2_0_4"/>
<dbReference type="Proteomes" id="UP000001424">
    <property type="component" value="Chromosome"/>
</dbReference>
<dbReference type="GO" id="GO:0005737">
    <property type="term" value="C:cytoplasm"/>
    <property type="evidence" value="ECO:0007669"/>
    <property type="project" value="UniProtKB-SubCell"/>
</dbReference>
<dbReference type="GO" id="GO:0005524">
    <property type="term" value="F:ATP binding"/>
    <property type="evidence" value="ECO:0007669"/>
    <property type="project" value="UniProtKB-UniRule"/>
</dbReference>
<dbReference type="GO" id="GO:0032267">
    <property type="term" value="F:tRNA(Ile)-lysidine synthase activity"/>
    <property type="evidence" value="ECO:0007669"/>
    <property type="project" value="UniProtKB-EC"/>
</dbReference>
<dbReference type="GO" id="GO:0006400">
    <property type="term" value="P:tRNA modification"/>
    <property type="evidence" value="ECO:0007669"/>
    <property type="project" value="UniProtKB-UniRule"/>
</dbReference>
<dbReference type="CDD" id="cd01992">
    <property type="entry name" value="TilS_N"/>
    <property type="match status" value="1"/>
</dbReference>
<dbReference type="Gene3D" id="1.20.59.20">
    <property type="match status" value="1"/>
</dbReference>
<dbReference type="Gene3D" id="3.40.50.620">
    <property type="entry name" value="HUPs"/>
    <property type="match status" value="1"/>
</dbReference>
<dbReference type="HAMAP" id="MF_01161">
    <property type="entry name" value="tRNA_Ile_lys_synt"/>
    <property type="match status" value="1"/>
</dbReference>
<dbReference type="InterPro" id="IPR012796">
    <property type="entry name" value="Lysidine-tRNA-synth_C"/>
</dbReference>
<dbReference type="InterPro" id="IPR014729">
    <property type="entry name" value="Rossmann-like_a/b/a_fold"/>
</dbReference>
<dbReference type="InterPro" id="IPR011063">
    <property type="entry name" value="TilS/TtcA_N"/>
</dbReference>
<dbReference type="InterPro" id="IPR012094">
    <property type="entry name" value="tRNA_Ile_lys_synt"/>
</dbReference>
<dbReference type="InterPro" id="IPR012795">
    <property type="entry name" value="tRNA_Ile_lys_synt_N"/>
</dbReference>
<dbReference type="InterPro" id="IPR015262">
    <property type="entry name" value="tRNA_Ile_lys_synt_subst-bd"/>
</dbReference>
<dbReference type="NCBIfam" id="TIGR02433">
    <property type="entry name" value="lysidine_TilS_C"/>
    <property type="match status" value="1"/>
</dbReference>
<dbReference type="NCBIfam" id="TIGR02432">
    <property type="entry name" value="lysidine_TilS_N"/>
    <property type="match status" value="1"/>
</dbReference>
<dbReference type="PANTHER" id="PTHR43033">
    <property type="entry name" value="TRNA(ILE)-LYSIDINE SYNTHASE-RELATED"/>
    <property type="match status" value="1"/>
</dbReference>
<dbReference type="PANTHER" id="PTHR43033:SF1">
    <property type="entry name" value="TRNA(ILE)-LYSIDINE SYNTHASE-RELATED"/>
    <property type="match status" value="1"/>
</dbReference>
<dbReference type="Pfam" id="PF01171">
    <property type="entry name" value="ATP_bind_3"/>
    <property type="match status" value="1"/>
</dbReference>
<dbReference type="Pfam" id="PF09179">
    <property type="entry name" value="TilS"/>
    <property type="match status" value="1"/>
</dbReference>
<dbReference type="Pfam" id="PF11734">
    <property type="entry name" value="TilS_C"/>
    <property type="match status" value="1"/>
</dbReference>
<dbReference type="SMART" id="SM00977">
    <property type="entry name" value="TilS_C"/>
    <property type="match status" value="1"/>
</dbReference>
<dbReference type="SUPFAM" id="SSF52402">
    <property type="entry name" value="Adenine nucleotide alpha hydrolases-like"/>
    <property type="match status" value="1"/>
</dbReference>
<dbReference type="SUPFAM" id="SSF82829">
    <property type="entry name" value="MesJ substrate recognition domain-like"/>
    <property type="match status" value="1"/>
</dbReference>
<dbReference type="SUPFAM" id="SSF56037">
    <property type="entry name" value="PheT/TilS domain"/>
    <property type="match status" value="1"/>
</dbReference>
<feature type="chain" id="PRO_0000181678" description="tRNA(Ile)-lysidine synthase">
    <location>
        <begin position="1"/>
        <end position="435"/>
    </location>
</feature>
<feature type="binding site" evidence="1">
    <location>
        <begin position="24"/>
        <end position="29"/>
    </location>
    <ligand>
        <name>ATP</name>
        <dbReference type="ChEBI" id="CHEBI:30616"/>
    </ligand>
</feature>
<reference key="1">
    <citation type="journal article" date="2003" name="Proc. Natl. Acad. Sci. U.S.A.">
        <title>The complete genome sequence of Chromobacterium violaceum reveals remarkable and exploitable bacterial adaptability.</title>
        <authorList>
            <person name="Vasconcelos A.T.R."/>
            <person name="de Almeida D.F."/>
            <person name="Hungria M."/>
            <person name="Guimaraes C.T."/>
            <person name="Antonio R.V."/>
            <person name="Almeida F.C."/>
            <person name="de Almeida L.G.P."/>
            <person name="de Almeida R."/>
            <person name="Alves-Gomes J.A."/>
            <person name="Andrade E.M."/>
            <person name="Araripe J."/>
            <person name="de Araujo M.F.F."/>
            <person name="Astolfi-Filho S."/>
            <person name="Azevedo V."/>
            <person name="Baptista A.J."/>
            <person name="Bataus L.A.M."/>
            <person name="Batista J.S."/>
            <person name="Belo A."/>
            <person name="van den Berg C."/>
            <person name="Bogo M."/>
            <person name="Bonatto S."/>
            <person name="Bordignon J."/>
            <person name="Brigido M.M."/>
            <person name="Brito C.A."/>
            <person name="Brocchi M."/>
            <person name="Burity H.A."/>
            <person name="Camargo A.A."/>
            <person name="Cardoso D.D.P."/>
            <person name="Carneiro N.P."/>
            <person name="Carraro D.M."/>
            <person name="Carvalho C.M.B."/>
            <person name="Cascardo J.C.M."/>
            <person name="Cavada B.S."/>
            <person name="Chueire L.M.O."/>
            <person name="Creczynski-Pasa T.B."/>
            <person name="Cunha-Junior N.C."/>
            <person name="Fagundes N."/>
            <person name="Falcao C.L."/>
            <person name="Fantinatti F."/>
            <person name="Farias I.P."/>
            <person name="Felipe M.S.S."/>
            <person name="Ferrari L.P."/>
            <person name="Ferro J.A."/>
            <person name="Ferro M.I.T."/>
            <person name="Franco G.R."/>
            <person name="Freitas N.S.A."/>
            <person name="Furlan L.R."/>
            <person name="Gazzinelli R.T."/>
            <person name="Gomes E.A."/>
            <person name="Goncalves P.R."/>
            <person name="Grangeiro T.B."/>
            <person name="Grattapaglia D."/>
            <person name="Grisard E.C."/>
            <person name="Hanna E.S."/>
            <person name="Jardim S.N."/>
            <person name="Laurino J."/>
            <person name="Leoi L.C.T."/>
            <person name="Lima L.F.A."/>
            <person name="Loureiro M.F."/>
            <person name="Lyra M.C.C.P."/>
            <person name="Madeira H.M.F."/>
            <person name="Manfio G.P."/>
            <person name="Maranhao A.Q."/>
            <person name="Martins W.S."/>
            <person name="di Mauro S.M.Z."/>
            <person name="de Medeiros S.R.B."/>
            <person name="Meissner R.V."/>
            <person name="Moreira M.A.M."/>
            <person name="Nascimento F.F."/>
            <person name="Nicolas M.F."/>
            <person name="Oliveira J.G."/>
            <person name="Oliveira S.C."/>
            <person name="Paixao R.F.C."/>
            <person name="Parente J.A."/>
            <person name="Pedrosa F.O."/>
            <person name="Pena S.D.J."/>
            <person name="Pereira J.O."/>
            <person name="Pereira M."/>
            <person name="Pinto L.S.R.C."/>
            <person name="Pinto L.S."/>
            <person name="Porto J.I.R."/>
            <person name="Potrich D.P."/>
            <person name="Ramalho-Neto C.E."/>
            <person name="Reis A.M.M."/>
            <person name="Rigo L.U."/>
            <person name="Rondinelli E."/>
            <person name="Santos E.B.P."/>
            <person name="Santos F.R."/>
            <person name="Schneider M.P.C."/>
            <person name="Seuanez H.N."/>
            <person name="Silva A.M.R."/>
            <person name="da Silva A.L.C."/>
            <person name="Silva D.W."/>
            <person name="Silva R."/>
            <person name="Simoes I.C."/>
            <person name="Simon D."/>
            <person name="Soares C.M.A."/>
            <person name="Soares R.B.A."/>
            <person name="Souza E.M."/>
            <person name="Souza K.R.L."/>
            <person name="Souza R.C."/>
            <person name="Steffens M.B.R."/>
            <person name="Steindel M."/>
            <person name="Teixeira S.R."/>
            <person name="Urmenyi T."/>
            <person name="Vettore A."/>
            <person name="Wassem R."/>
            <person name="Zaha A."/>
            <person name="Simpson A.J.G."/>
        </authorList>
    </citation>
    <scope>NUCLEOTIDE SEQUENCE [LARGE SCALE GENOMIC DNA]</scope>
    <source>
        <strain>ATCC 12472 / DSM 30191 / JCM 1249 / CCUG 213 / NBRC 12614 / NCIMB 9131 / NCTC 9757 / MK</strain>
    </source>
</reference>
<keyword id="KW-0067">ATP-binding</keyword>
<keyword id="KW-0963">Cytoplasm</keyword>
<keyword id="KW-0436">Ligase</keyword>
<keyword id="KW-0547">Nucleotide-binding</keyword>
<keyword id="KW-1185">Reference proteome</keyword>
<keyword id="KW-0819">tRNA processing</keyword>
<proteinExistence type="inferred from homology"/>
<organism>
    <name type="scientific">Chromobacterium violaceum (strain ATCC 12472 / DSM 30191 / JCM 1249 / CCUG 213 / NBRC 12614 / NCIMB 9131 / NCTC 9757 / MK)</name>
    <dbReference type="NCBI Taxonomy" id="243365"/>
    <lineage>
        <taxon>Bacteria</taxon>
        <taxon>Pseudomonadati</taxon>
        <taxon>Pseudomonadota</taxon>
        <taxon>Betaproteobacteria</taxon>
        <taxon>Neisseriales</taxon>
        <taxon>Chromobacteriaceae</taxon>
        <taxon>Chromobacterium</taxon>
    </lineage>
</organism>
<protein>
    <recommendedName>
        <fullName evidence="1">tRNA(Ile)-lysidine synthase</fullName>
        <ecNumber evidence="1">6.3.4.19</ecNumber>
    </recommendedName>
    <alternativeName>
        <fullName evidence="1">tRNA(Ile)-2-lysyl-cytidine synthase</fullName>
    </alternativeName>
    <alternativeName>
        <fullName evidence="1">tRNA(Ile)-lysidine synthetase</fullName>
    </alternativeName>
</protein>
<comment type="function">
    <text evidence="1">Ligates lysine onto the cytidine present at position 34 of the AUA codon-specific tRNA(Ile) that contains the anticodon CAU, in an ATP-dependent manner. Cytidine is converted to lysidine, thus changing the amino acid specificity of the tRNA from methionine to isoleucine.</text>
</comment>
<comment type="catalytic activity">
    <reaction evidence="1">
        <text>cytidine(34) in tRNA(Ile2) + L-lysine + ATP = lysidine(34) in tRNA(Ile2) + AMP + diphosphate + H(+)</text>
        <dbReference type="Rhea" id="RHEA:43744"/>
        <dbReference type="Rhea" id="RHEA-COMP:10625"/>
        <dbReference type="Rhea" id="RHEA-COMP:10670"/>
        <dbReference type="ChEBI" id="CHEBI:15378"/>
        <dbReference type="ChEBI" id="CHEBI:30616"/>
        <dbReference type="ChEBI" id="CHEBI:32551"/>
        <dbReference type="ChEBI" id="CHEBI:33019"/>
        <dbReference type="ChEBI" id="CHEBI:82748"/>
        <dbReference type="ChEBI" id="CHEBI:83665"/>
        <dbReference type="ChEBI" id="CHEBI:456215"/>
        <dbReference type="EC" id="6.3.4.19"/>
    </reaction>
</comment>
<comment type="subcellular location">
    <subcellularLocation>
        <location evidence="1">Cytoplasm</location>
    </subcellularLocation>
</comment>
<comment type="domain">
    <text>The N-terminal region contains the highly conserved SGGXDS motif, predicted to be a P-loop motif involved in ATP binding.</text>
</comment>
<comment type="similarity">
    <text evidence="1">Belongs to the tRNA(Ile)-lysidine synthase family.</text>
</comment>
<sequence length="435" mass="47947">MADSLIEHWPDELSGLFAFEVGFSGGLDSVALLSLLCEARARRPEIGLSAVHVHHGLSPNADAWAAHCQALCDSLRVPLRIERVHVRAGGGESVEAAAREARYQVYRRSASEVIALAHHQDDQAETILLQLLRGGGARALAAMPALRELAPGKLLWRPLLEIPRERLEAYVKARGFAWVDDESNLDTRYRRNLLRHDILPRLERALPHYRSHLARAAMLQADAAAILDEVAREDLQACRTENGLDCGSVLALSAPRRRQTLLAWLDALGWPAPEPGALLEFLRQAEYAERGASPVLRLRQGCLLRFADTLQAWPKAQSEPPASTALLWRGGDAQSLSEWGGELAWERRDAGVPAALLESGAYLAPRRGGEKLSARVGRREVKDLLREAGVPPLLRRRWPLLYGADGELLAVPGIAVSYRAAADGGWWPLWRPARP</sequence>